<proteinExistence type="inferred from homology"/>
<gene>
    <name evidence="1" type="primary">petD</name>
    <name type="ordered locus">NATL1_04181</name>
</gene>
<keyword id="KW-0249">Electron transport</keyword>
<keyword id="KW-0472">Membrane</keyword>
<keyword id="KW-0602">Photosynthesis</keyword>
<keyword id="KW-0793">Thylakoid</keyword>
<keyword id="KW-0812">Transmembrane</keyword>
<keyword id="KW-1133">Transmembrane helix</keyword>
<keyword id="KW-0813">Transport</keyword>
<sequence>MSTLKKPDLTDTKLRAKLAKGMGHNYYGEPAWPNDLLYIFPVVILGTIACVVGLAVLDPAFLGDKANPFATPLEILPEWYLYPVFQILRVVPNKLLGIALQTLIPLGLMILPFIENINKFANPFRRPVAMSLFLFGTVLTMYLGIGACLPIDKSLTLGLF</sequence>
<name>PETD_PROM1</name>
<evidence type="ECO:0000255" key="1">
    <source>
        <dbReference type="HAMAP-Rule" id="MF_01344"/>
    </source>
</evidence>
<reference key="1">
    <citation type="journal article" date="2007" name="PLoS Genet.">
        <title>Patterns and implications of gene gain and loss in the evolution of Prochlorococcus.</title>
        <authorList>
            <person name="Kettler G.C."/>
            <person name="Martiny A.C."/>
            <person name="Huang K."/>
            <person name="Zucker J."/>
            <person name="Coleman M.L."/>
            <person name="Rodrigue S."/>
            <person name="Chen F."/>
            <person name="Lapidus A."/>
            <person name="Ferriera S."/>
            <person name="Johnson J."/>
            <person name="Steglich C."/>
            <person name="Church G.M."/>
            <person name="Richardson P."/>
            <person name="Chisholm S.W."/>
        </authorList>
    </citation>
    <scope>NUCLEOTIDE SEQUENCE [LARGE SCALE GENOMIC DNA]</scope>
    <source>
        <strain>NATL1A</strain>
    </source>
</reference>
<accession>A2C0H2</accession>
<dbReference type="EMBL" id="CP000553">
    <property type="protein sequence ID" value="ABM74982.1"/>
    <property type="molecule type" value="Genomic_DNA"/>
</dbReference>
<dbReference type="RefSeq" id="WP_011294337.1">
    <property type="nucleotide sequence ID" value="NC_008819.1"/>
</dbReference>
<dbReference type="SMR" id="A2C0H2"/>
<dbReference type="KEGG" id="pme:NATL1_04181"/>
<dbReference type="eggNOG" id="COG1290">
    <property type="taxonomic scope" value="Bacteria"/>
</dbReference>
<dbReference type="HOGENOM" id="CLU_112652_0_0_3"/>
<dbReference type="Proteomes" id="UP000002592">
    <property type="component" value="Chromosome"/>
</dbReference>
<dbReference type="GO" id="GO:0031676">
    <property type="term" value="C:plasma membrane-derived thylakoid membrane"/>
    <property type="evidence" value="ECO:0007669"/>
    <property type="project" value="UniProtKB-SubCell"/>
</dbReference>
<dbReference type="GO" id="GO:0045158">
    <property type="term" value="F:electron transporter, transferring electrons within cytochrome b6/f complex of photosystem II activity"/>
    <property type="evidence" value="ECO:0007669"/>
    <property type="project" value="UniProtKB-UniRule"/>
</dbReference>
<dbReference type="GO" id="GO:0045156">
    <property type="term" value="F:electron transporter, transferring electrons within the cyclic electron transport pathway of photosynthesis activity"/>
    <property type="evidence" value="ECO:0007669"/>
    <property type="project" value="InterPro"/>
</dbReference>
<dbReference type="GO" id="GO:0008121">
    <property type="term" value="F:ubiquinol-cytochrome-c reductase activity"/>
    <property type="evidence" value="ECO:0007669"/>
    <property type="project" value="TreeGrafter"/>
</dbReference>
<dbReference type="GO" id="GO:0009767">
    <property type="term" value="P:photosynthetic electron transport chain"/>
    <property type="evidence" value="ECO:0007669"/>
    <property type="project" value="InterPro"/>
</dbReference>
<dbReference type="CDD" id="cd00290">
    <property type="entry name" value="cytochrome_b_C"/>
    <property type="match status" value="1"/>
</dbReference>
<dbReference type="FunFam" id="1.10.287.980:FF:000001">
    <property type="entry name" value="Cytochrome b6-f complex subunit 4"/>
    <property type="match status" value="1"/>
</dbReference>
<dbReference type="FunFam" id="1.20.5.510:FF:000002">
    <property type="entry name" value="Cytochrome b6-f complex subunit 4"/>
    <property type="match status" value="1"/>
</dbReference>
<dbReference type="Gene3D" id="1.10.287.980">
    <property type="entry name" value="plastocyanin oxidoreductase"/>
    <property type="match status" value="1"/>
</dbReference>
<dbReference type="Gene3D" id="1.20.5.510">
    <property type="entry name" value="Single helix bin"/>
    <property type="match status" value="1"/>
</dbReference>
<dbReference type="HAMAP" id="MF_01344">
    <property type="entry name" value="Cytb6_f_subIV"/>
    <property type="match status" value="1"/>
</dbReference>
<dbReference type="InterPro" id="IPR005798">
    <property type="entry name" value="Cyt_b/b6_C"/>
</dbReference>
<dbReference type="InterPro" id="IPR036150">
    <property type="entry name" value="Cyt_b/b6_C_sf"/>
</dbReference>
<dbReference type="InterPro" id="IPR005870">
    <property type="entry name" value="Cyt_b6/f_cplx_suIV"/>
</dbReference>
<dbReference type="InterPro" id="IPR048260">
    <property type="entry name" value="Cytochrome_b_C_euk/bac"/>
</dbReference>
<dbReference type="NCBIfam" id="TIGR01156">
    <property type="entry name" value="cytb6_f_IV"/>
    <property type="match status" value="1"/>
</dbReference>
<dbReference type="PANTHER" id="PTHR19271">
    <property type="entry name" value="CYTOCHROME B"/>
    <property type="match status" value="1"/>
</dbReference>
<dbReference type="PANTHER" id="PTHR19271:SF41">
    <property type="entry name" value="CYTOCHROME B_B6 C-TERMINAL REGION PROFILE DOMAIN-CONTAINING PROTEIN"/>
    <property type="match status" value="1"/>
</dbReference>
<dbReference type="Pfam" id="PF00032">
    <property type="entry name" value="Cytochrom_B_C"/>
    <property type="match status" value="1"/>
</dbReference>
<dbReference type="PIRSF" id="PIRSF000033">
    <property type="entry name" value="B6f_17K"/>
    <property type="match status" value="1"/>
</dbReference>
<dbReference type="SUPFAM" id="SSF81648">
    <property type="entry name" value="a domain/subunit of cytochrome bc1 complex (Ubiquinol-cytochrome c reductase)"/>
    <property type="match status" value="1"/>
</dbReference>
<dbReference type="PROSITE" id="PS51003">
    <property type="entry name" value="CYTB_CTER"/>
    <property type="match status" value="1"/>
</dbReference>
<organism>
    <name type="scientific">Prochlorococcus marinus (strain NATL1A)</name>
    <dbReference type="NCBI Taxonomy" id="167555"/>
    <lineage>
        <taxon>Bacteria</taxon>
        <taxon>Bacillati</taxon>
        <taxon>Cyanobacteriota</taxon>
        <taxon>Cyanophyceae</taxon>
        <taxon>Synechococcales</taxon>
        <taxon>Prochlorococcaceae</taxon>
        <taxon>Prochlorococcus</taxon>
    </lineage>
</organism>
<protein>
    <recommendedName>
        <fullName evidence="1">Cytochrome b6-f complex subunit 4</fullName>
    </recommendedName>
    <alternativeName>
        <fullName evidence="1">17 kDa polypeptide</fullName>
    </alternativeName>
</protein>
<comment type="function">
    <text evidence="1">Component of the cytochrome b6-f complex, which mediates electron transfer between photosystem II (PSII) and photosystem I (PSI), cyclic electron flow around PSI, and state transitions.</text>
</comment>
<comment type="subunit">
    <text evidence="1">The 4 large subunits of the cytochrome b6-f complex are cytochrome b6, subunit IV (17 kDa polypeptide, PetD), cytochrome f and the Rieske protein, while the 4 small subunits are PetG, PetL, PetM and PetN. The complex functions as a dimer.</text>
</comment>
<comment type="subcellular location">
    <subcellularLocation>
        <location evidence="1">Cellular thylakoid membrane</location>
        <topology evidence="1">Multi-pass membrane protein</topology>
    </subcellularLocation>
</comment>
<comment type="similarity">
    <text evidence="1">Belongs to the cytochrome b family. PetD subfamily.</text>
</comment>
<feature type="chain" id="PRO_1000054898" description="Cytochrome b6-f complex subunit 4">
    <location>
        <begin position="1"/>
        <end position="160"/>
    </location>
</feature>
<feature type="transmembrane region" description="Helical" evidence="1">
    <location>
        <begin position="36"/>
        <end position="56"/>
    </location>
</feature>
<feature type="transmembrane region" description="Helical" evidence="1">
    <location>
        <begin position="95"/>
        <end position="115"/>
    </location>
</feature>
<feature type="transmembrane region" description="Helical" evidence="1">
    <location>
        <begin position="131"/>
        <end position="151"/>
    </location>
</feature>